<comment type="function">
    <text evidence="1 4">Plays critical roles in virus replication, from virus entry and uncoating to assembly and budding of the virus particle. M1 binding to ribonucleocapsids (RNPs) in nucleus seems to inhibit viral transcription. Interaction of viral NEP with M1-RNP is thought to promote nuclear export of the complex, which is targeted to the virion assembly site at the apical plasma membrane in polarized epithelial cells. Interactions with NA and HA may bring M1, a non-raft-associated protein, into lipid rafts. Forms a continuous shell on the inner side of the lipid bilayer in virion, where it binds the RNP. During virus entry into cell, the M2 ion channel acidifies the internal virion core, inducing M1 dissociation from the RNP. M1-free RNPs are transported to the nucleus, where viral transcription and replication can take place.</text>
</comment>
<comment type="function">
    <text evidence="1 4">Determines the virion's shape: spherical or filamentous. Clinical isolates of influenza are characterized by the presence of significant proportion of filamentous virions, whereas after multiple passage on eggs or cell culture, virions have only spherical morphology. Filamentous virions are thought to be important to infect neighboring cells, and spherical virions more suited to spread through aerosol between hosts organisms.</text>
</comment>
<comment type="subunit">
    <text evidence="1 3">Homodimer and homomultimer. Interacts with NEP. Binds ribonucleocapsid by both interacting with genomic RNA and NP protein. May interact with HA and NA. Cannot bind NP without genomic RNA.</text>
</comment>
<comment type="subcellular location">
    <subcellularLocation>
        <location evidence="1">Virion membrane</location>
        <topology evidence="1">Peripheral membrane protein</topology>
        <orientation evidence="1">Cytoplasmic side</orientation>
    </subcellularLocation>
    <subcellularLocation>
        <location evidence="1">Host nucleus</location>
    </subcellularLocation>
</comment>
<comment type="alternative products">
    <event type="alternative splicing"/>
    <isoform>
        <id>P05777-1</id>
        <name>M1</name>
        <sequence type="displayed"/>
    </isoform>
    <isoform>
        <id>P05780-1</id>
        <name>M2</name>
        <sequence type="external"/>
    </isoform>
    <text>Only the first 9 residues are shared by the 2 isoforms.</text>
</comment>
<comment type="miscellaneous">
    <text evidence="1">Most abundant protein in virion. When expressed alone can form virus-like particles in transfected cells.</text>
</comment>
<comment type="similarity">
    <text evidence="1">Belongs to the influenza viruses Matrix protein M1 family.</text>
</comment>
<comment type="caution">
    <text evidence="7">An article reported mutagenesis experiments; however, this paper was later retracted.</text>
</comment>
<proteinExistence type="evidence at protein level"/>
<organismHost>
    <name type="scientific">Aves</name>
    <dbReference type="NCBI Taxonomy" id="8782"/>
</organismHost>
<organismHost>
    <name type="scientific">Homo sapiens</name>
    <name type="common">Human</name>
    <dbReference type="NCBI Taxonomy" id="9606"/>
</organismHost>
<organismHost>
    <name type="scientific">Sus scrofa</name>
    <name type="common">Pig</name>
    <dbReference type="NCBI Taxonomy" id="9823"/>
</organismHost>
<evidence type="ECO:0000255" key="1">
    <source>
        <dbReference type="HAMAP-Rule" id="MF_04068"/>
    </source>
</evidence>
<evidence type="ECO:0000269" key="2">
    <source>
    </source>
</evidence>
<evidence type="ECO:0000269" key="3">
    <source>
    </source>
</evidence>
<evidence type="ECO:0000269" key="4">
    <source>
    </source>
</evidence>
<evidence type="ECO:0000269" key="5">
    <source>
    </source>
</evidence>
<evidence type="ECO:0000269" key="6">
    <source>
    </source>
</evidence>
<evidence type="ECO:0000305" key="7">
    <source>
    </source>
</evidence>
<evidence type="ECO:0007829" key="8">
    <source>
        <dbReference type="PDB" id="5V6G"/>
    </source>
</evidence>
<evidence type="ECO:0007829" key="9">
    <source>
        <dbReference type="PDB" id="6I3H"/>
    </source>
</evidence>
<organism>
    <name type="scientific">Influenza A virus (strain A/Wilson-Smith/1933 H1N1)</name>
    <name type="common">Influenza A virus (strain A/WS/1933 H1N1)</name>
    <dbReference type="NCBI Taxonomy" id="381518"/>
    <lineage>
        <taxon>Viruses</taxon>
        <taxon>Riboviria</taxon>
        <taxon>Orthornavirae</taxon>
        <taxon>Negarnaviricota</taxon>
        <taxon>Polyploviricotina</taxon>
        <taxon>Insthoviricetes</taxon>
        <taxon>Articulavirales</taxon>
        <taxon>Orthomyxoviridae</taxon>
        <taxon>Alphainfluenzavirus</taxon>
        <taxon>Alphainfluenzavirus influenzae</taxon>
        <taxon>Influenza A virus</taxon>
    </lineage>
</organism>
<protein>
    <recommendedName>
        <fullName evidence="1">Matrix protein 1</fullName>
        <shortName evidence="1">M1</shortName>
    </recommendedName>
</protein>
<reference key="1">
    <citation type="journal article" date="1989" name="Nucleic Acids Res.">
        <title>Nucleotide sequences of influenza A virus RNA segment 7: a comparison of five isolates.</title>
        <authorList>
            <person name="Zebedee S.L."/>
            <person name="Lamb R.A."/>
        </authorList>
    </citation>
    <scope>NUCLEOTIDE SEQUENCE [GENOMIC RNA]</scope>
</reference>
<reference key="2">
    <citation type="journal article" date="1988" name="Virus Res.">
        <title>Nucleotide sequence of RNA segment 7 and the predicted amino sequence of M1 and M2 proteins of FPV/Weybridge (H7N7) and WSN (H1N1) influenza viruses.</title>
        <authorList>
            <person name="Markushin S."/>
            <person name="Ghiasi H."/>
            <person name="Sokolov N."/>
            <person name="Shilov A."/>
            <person name="Sinitsin B."/>
            <person name="Brown D."/>
            <person name="Klimov A."/>
            <person name="Nayak D."/>
        </authorList>
    </citation>
    <scope>NUCLEOTIDE SEQUENCE [GENOMIC RNA]</scope>
</reference>
<reference key="3">
    <citation type="journal article" date="1988" name="Virology">
        <title>Transient expression and sequence of the matrix (M1) gene of WSN influenza A virus in a vaccinia vector.</title>
        <authorList>
            <person name="Baylor N.W."/>
            <person name="Zhiping Y.L."/>
            <person name="Wagner R.R."/>
        </authorList>
    </citation>
    <scope>NUCLEOTIDE SEQUENCE [GENOMIC RNA]</scope>
</reference>
<reference key="4">
    <citation type="journal article" date="1999" name="J. Virol.">
        <title>Association of influenza virus matrix protein with ribonucleoproteins.</title>
        <authorList>
            <person name="Ye Z."/>
            <person name="Liu T."/>
            <person name="Offringa D.P."/>
            <person name="McInnis J."/>
            <person name="Levandowski R.A."/>
        </authorList>
    </citation>
    <scope>MUTAGENESIS OF 101-ARG--ARG-105 AND CYS-148</scope>
</reference>
<reference key="5">
    <citation type="journal article" date="2000" name="J. Virol.">
        <title>Influenza virus assembly: effect of influenza virus glycoproteins on the membrane association of M1 protein.</title>
        <authorList>
            <person name="Ali A."/>
            <person name="Avalos R.T."/>
            <person name="Ponimaskin E."/>
            <person name="Nayak D.P."/>
        </authorList>
    </citation>
    <scope>INTERACTION WITH HA AND NA</scope>
</reference>
<reference key="6">
    <citation type="journal article" date="2003" name="J. Gen. Virol.">
        <title>Conserved cysteine and histidine residues in the putative zinc finger motif of the influenza A virus M1 protein are not critical for influenza virus replication.</title>
        <authorList>
            <person name="Hui E.K."/>
            <person name="Ralston K."/>
            <person name="Judd A.K."/>
            <person name="Nayak D.P."/>
        </authorList>
    </citation>
    <scope>MUTAGENESIS OF CYS-148; CYS-151; ALA-155; HIS-159 AND HIS-162</scope>
</reference>
<reference key="7">
    <citation type="journal article" date="2003" name="J. Gen. Virol.">
        <title>Reverse genetics studies on the filamentous morphology of influenza A virus.</title>
        <authorList>
            <person name="Bourmakina S.V."/>
            <person name="Garcia-Sastre A."/>
        </authorList>
    </citation>
    <scope>FUNCTION</scope>
</reference>
<reference key="8">
    <citation type="journal article" date="2003" name="J. Virol.">
        <title>Basic residues of the helix six domain of influenza virus M1 involved in nuclear translocation of M1 can be replaced by PTAP and YPDL late assembly domain motifs.</title>
        <authorList>
            <person name="Hui E.K."/>
            <person name="Barman S."/>
            <person name="Yang T.Y."/>
            <person name="Nayak D.P."/>
        </authorList>
    </citation>
    <scope>RETRACTED PAPER</scope>
</reference>
<reference key="9">
    <citation type="journal article" date="2006" name="J. Virol.">
        <title>Retraction.</title>
        <authorList>
            <person name="Hui E.K."/>
            <person name="Barman S."/>
            <person name="Yang T.Y."/>
            <person name="Tang D.H."/>
            <person name="France B."/>
            <person name="Nayak D.P."/>
        </authorList>
    </citation>
    <scope>RETRACTION NOTICE OF PUBMED:12768027</scope>
</reference>
<reference key="10">
    <citation type="journal article" date="2004" name="Virology">
        <title>The M1 matrix protein controls the filamentous phenotype of influenza A virus.</title>
        <authorList>
            <person name="Elleman C.J."/>
            <person name="Barclay W.S."/>
        </authorList>
    </citation>
    <scope>MUTAGENESIS OF VAL-41; LYS-95 AND THR-218</scope>
</reference>
<accession>P05777</accession>
<dbReference type="EMBL" id="X08088">
    <property type="protein sequence ID" value="CAA30882.1"/>
    <property type="molecule type" value="Genomic_RNA"/>
</dbReference>
<dbReference type="EMBL" id="M23920">
    <property type="protein sequence ID" value="AAA43252.1"/>
    <property type="status" value="ALT_SEQ"/>
    <property type="molecule type" value="Genomic_RNA"/>
</dbReference>
<dbReference type="EMBL" id="M19374">
    <property type="protein sequence ID" value="AAA43352.1"/>
    <property type="molecule type" value="Genomic_RNA"/>
</dbReference>
<dbReference type="EMBL" id="L25818">
    <property type="protein sequence ID" value="AAA91325.1"/>
    <property type="molecule type" value="Genomic_RNA"/>
</dbReference>
<dbReference type="PIR" id="A28608">
    <property type="entry name" value="MFIVWS"/>
</dbReference>
<dbReference type="PIR" id="S07429">
    <property type="entry name" value="S07429"/>
</dbReference>
<dbReference type="PDB" id="4PUS">
    <property type="method" value="X-ray"/>
    <property type="resolution" value="2.20 A"/>
    <property type="chains" value="A/B=2-165"/>
</dbReference>
<dbReference type="PDB" id="5V6G">
    <property type="method" value="X-ray"/>
    <property type="resolution" value="2.00 A"/>
    <property type="chains" value="A/B/C/D=2-165"/>
</dbReference>
<dbReference type="PDB" id="5V7B">
    <property type="method" value="X-ray"/>
    <property type="resolution" value="2.50 A"/>
    <property type="chains" value="A/B=2-165"/>
</dbReference>
<dbReference type="PDB" id="5V7S">
    <property type="method" value="X-ray"/>
    <property type="resolution" value="2.50 A"/>
    <property type="chains" value="A/B/C=2-165"/>
</dbReference>
<dbReference type="PDB" id="5V8A">
    <property type="method" value="X-ray"/>
    <property type="resolution" value="3.00 A"/>
    <property type="chains" value="A=2-165"/>
</dbReference>
<dbReference type="PDB" id="6I3H">
    <property type="method" value="X-ray"/>
    <property type="resolution" value="1.90 A"/>
    <property type="chains" value="A/B=1-158"/>
</dbReference>
<dbReference type="PDB" id="6QZD">
    <property type="method" value="X-ray"/>
    <property type="resolution" value="2.66 A"/>
    <property type="chains" value="CCC/FFF=17-30"/>
</dbReference>
<dbReference type="PDBsum" id="4PUS"/>
<dbReference type="PDBsum" id="5V6G"/>
<dbReference type="PDBsum" id="5V7B"/>
<dbReference type="PDBsum" id="5V7S"/>
<dbReference type="PDBsum" id="5V8A"/>
<dbReference type="PDBsum" id="6I3H"/>
<dbReference type="PDBsum" id="6QZD"/>
<dbReference type="SMR" id="P05777"/>
<dbReference type="EvolutionaryTrace" id="P05777"/>
<dbReference type="Proteomes" id="UP000000834">
    <property type="component" value="Genome"/>
</dbReference>
<dbReference type="GO" id="GO:0042025">
    <property type="term" value="C:host cell nucleus"/>
    <property type="evidence" value="ECO:0007669"/>
    <property type="project" value="UniProtKB-SubCell"/>
</dbReference>
<dbReference type="GO" id="GO:0016020">
    <property type="term" value="C:membrane"/>
    <property type="evidence" value="ECO:0007669"/>
    <property type="project" value="UniProtKB-KW"/>
</dbReference>
<dbReference type="GO" id="GO:0055036">
    <property type="term" value="C:virion membrane"/>
    <property type="evidence" value="ECO:0007669"/>
    <property type="project" value="UniProtKB-SubCell"/>
</dbReference>
<dbReference type="GO" id="GO:0003723">
    <property type="term" value="F:RNA binding"/>
    <property type="evidence" value="ECO:0007669"/>
    <property type="project" value="UniProtKB-UniRule"/>
</dbReference>
<dbReference type="GO" id="GO:0039660">
    <property type="term" value="F:structural constituent of virion"/>
    <property type="evidence" value="ECO:0007669"/>
    <property type="project" value="UniProtKB-UniRule"/>
</dbReference>
<dbReference type="GO" id="GO:0046761">
    <property type="term" value="P:viral budding from plasma membrane"/>
    <property type="evidence" value="ECO:0007669"/>
    <property type="project" value="UniProtKB-UniRule"/>
</dbReference>
<dbReference type="FunFam" id="1.10.10.180:FF:000001">
    <property type="entry name" value="Matrix protein 1"/>
    <property type="match status" value="1"/>
</dbReference>
<dbReference type="FunFam" id="1.20.91.10:FF:000001">
    <property type="entry name" value="Matrix protein 1"/>
    <property type="match status" value="1"/>
</dbReference>
<dbReference type="Gene3D" id="1.10.10.180">
    <property type="match status" value="1"/>
</dbReference>
<dbReference type="Gene3D" id="1.20.91.10">
    <property type="match status" value="1"/>
</dbReference>
<dbReference type="HAMAP" id="MF_04068">
    <property type="entry name" value="INFV_M1"/>
    <property type="match status" value="1"/>
</dbReference>
<dbReference type="InterPro" id="IPR036039">
    <property type="entry name" value="Flu_matrix_M1"/>
</dbReference>
<dbReference type="InterPro" id="IPR013188">
    <property type="entry name" value="Flu_matrix_M1_C"/>
</dbReference>
<dbReference type="InterPro" id="IPR001561">
    <property type="entry name" value="Flu_matrix_M1_N"/>
</dbReference>
<dbReference type="InterPro" id="IPR015423">
    <property type="entry name" value="Flu_matrix_M1_N_sub1"/>
</dbReference>
<dbReference type="InterPro" id="IPR015799">
    <property type="entry name" value="Flu_matrix_M1_N_sub2"/>
</dbReference>
<dbReference type="InterPro" id="IPR037533">
    <property type="entry name" value="INFV_M1"/>
</dbReference>
<dbReference type="Pfam" id="PF00598">
    <property type="entry name" value="Flu_M1"/>
    <property type="match status" value="1"/>
</dbReference>
<dbReference type="Pfam" id="PF08289">
    <property type="entry name" value="Flu_M1_C"/>
    <property type="match status" value="1"/>
</dbReference>
<dbReference type="SMART" id="SM00759">
    <property type="entry name" value="Flu_M1_C"/>
    <property type="match status" value="1"/>
</dbReference>
<dbReference type="SUPFAM" id="SSF48145">
    <property type="entry name" value="Influenza virus matrix protein M1"/>
    <property type="match status" value="1"/>
</dbReference>
<keyword id="KW-0002">3D-structure</keyword>
<keyword id="KW-0025">Alternative splicing</keyword>
<keyword id="KW-1048">Host nucleus</keyword>
<keyword id="KW-0472">Membrane</keyword>
<keyword id="KW-0694">RNA-binding</keyword>
<keyword id="KW-0468">Viral matrix protein</keyword>
<keyword id="KW-0946">Virion</keyword>
<name>M1_I33A0</name>
<gene>
    <name evidence="1" type="primary">M</name>
</gene>
<feature type="chain" id="PRO_0000078868" description="Matrix protein 1">
    <location>
        <begin position="1"/>
        <end position="252"/>
    </location>
</feature>
<feature type="region of interest" description="Membrane-binding" evidence="1">
    <location>
        <begin position="1"/>
        <end position="164"/>
    </location>
</feature>
<feature type="region of interest" description="RNP-binding" evidence="1">
    <location>
        <begin position="165"/>
        <end position="252"/>
    </location>
</feature>
<feature type="short sequence motif" description="Nuclear localization signal" evidence="1">
    <location>
        <begin position="101"/>
        <end position="105"/>
    </location>
</feature>
<feature type="mutagenesis site" description="Induces short filamentous virions." evidence="6">
    <original>V</original>
    <variation>A</variation>
    <location>
        <position position="41"/>
    </location>
</feature>
<feature type="mutagenesis site" description="No effect." evidence="6">
    <original>K</original>
    <variation>A</variation>
    <variation>R</variation>
    <location>
        <position position="95"/>
    </location>
</feature>
<feature type="mutagenesis site" description="Can't be rescued by reverse genetic.">
    <original>YRKL</original>
    <variation>AAAA</variation>
    <variation>PPPY</variation>
    <location>
        <begin position="100"/>
        <end position="103"/>
    </location>
</feature>
<feature type="mutagenesis site" description="No effect.">
    <original>YRKL</original>
    <variation>PTAP</variation>
    <location>
        <begin position="100"/>
        <end position="103"/>
    </location>
</feature>
<feature type="mutagenesis site" description="50% loss of RNA binding activity." evidence="2">
    <original>RKLKR</original>
    <variation>SNLNS</variation>
    <location>
        <begin position="101"/>
        <end position="105"/>
    </location>
</feature>
<feature type="mutagenesis site" description="No effect.">
    <original>RK</original>
    <variation>PD</variation>
    <location>
        <begin position="101"/>
        <end position="102"/>
    </location>
</feature>
<feature type="mutagenesis site" description="No effect." evidence="2 5">
    <original>C</original>
    <variation>A</variation>
    <location>
        <position position="148"/>
    </location>
</feature>
<feature type="mutagenesis site" description="31% loss of RNA binding activity." evidence="2 5">
    <original>C</original>
    <variation>S</variation>
    <location>
        <position position="148"/>
    </location>
</feature>
<feature type="mutagenesis site" description="No effect." evidence="5">
    <original>C</original>
    <variation>A</variation>
    <location>
        <position position="151"/>
    </location>
</feature>
<feature type="mutagenesis site" description="Complete loss of virus ability to be rescued in a reverse genetic system." evidence="5">
    <original>A</original>
    <variation>G</variation>
    <location>
        <position position="155"/>
    </location>
</feature>
<feature type="mutagenesis site" description="No effect." evidence="5">
    <original>H</original>
    <variation>A</variation>
    <location>
        <position position="159"/>
    </location>
</feature>
<feature type="mutagenesis site" description="No effect." evidence="5">
    <original>H</original>
    <variation>A</variation>
    <location>
        <position position="162"/>
    </location>
</feature>
<feature type="mutagenesis site" description="No effect on virion morphology." evidence="6">
    <original>T</original>
    <variation>A</variation>
    <location>
        <position position="218"/>
    </location>
</feature>
<feature type="sequence conflict" description="In Ref. 3; AAA43352." ref="3">
    <original>L</original>
    <variation>F</variation>
    <location>
        <position position="117"/>
    </location>
</feature>
<feature type="sequence conflict" description="In Ref. 3; AAA43352." ref="3">
    <original>I</original>
    <variation>V</variation>
    <location>
        <position position="219"/>
    </location>
</feature>
<feature type="sequence conflict" description="In Ref. 2; AAA43252." ref="2">
    <original>D</original>
    <variation>S</variation>
    <location>
        <position position="231"/>
    </location>
</feature>
<feature type="helix" evidence="9">
    <location>
        <begin position="1"/>
        <end position="13"/>
    </location>
</feature>
<feature type="helix" evidence="9">
    <location>
        <begin position="19"/>
        <end position="32"/>
    </location>
</feature>
<feature type="helix" evidence="9">
    <location>
        <begin position="39"/>
        <end position="48"/>
    </location>
</feature>
<feature type="strand" evidence="8">
    <location>
        <begin position="50"/>
        <end position="52"/>
    </location>
</feature>
<feature type="helix" evidence="9">
    <location>
        <begin position="54"/>
        <end position="67"/>
    </location>
</feature>
<feature type="helix" evidence="9">
    <location>
        <begin position="78"/>
        <end position="83"/>
    </location>
</feature>
<feature type="helix" evidence="8">
    <location>
        <begin position="86"/>
        <end position="88"/>
    </location>
</feature>
<feature type="helix" evidence="9">
    <location>
        <begin position="91"/>
        <end position="103"/>
    </location>
</feature>
<feature type="helix" evidence="9">
    <location>
        <begin position="109"/>
        <end position="116"/>
    </location>
</feature>
<feature type="helix" evidence="9">
    <location>
        <begin position="121"/>
        <end position="132"/>
    </location>
</feature>
<feature type="helix" evidence="9">
    <location>
        <begin position="135"/>
        <end position="137"/>
    </location>
</feature>
<feature type="helix" evidence="9">
    <location>
        <begin position="140"/>
        <end position="157"/>
    </location>
</feature>
<sequence>MSLLTEVETYVLSIVPSGPLKAEIAQRLEDVFAGKNTDLEVLMEWLKTRPILSPLTKGILGFVFTLTVPSERGLQRRRFVQNALNGNGDPNNMDKAVKLYRKLKREITFHGAKEIALSYSAGALASCMGLIYNRMGAVTTEVAFGLVCATCEQIADSQHRSHRQMVTTTNPLIRHENRMVLASTTAKAMEQMAGSSEQAAEAMDIASQARQMVQAMRTIGTHPSSSAGLKDDLLENLQAYQKRMGVQMQRFK</sequence>